<reference key="1">
    <citation type="journal article" date="2006" name="Gene">
        <title>Identification and characterization of cytokinin-signalling gene families in rice.</title>
        <authorList>
            <person name="Ito Y."/>
            <person name="Kurata N."/>
        </authorList>
    </citation>
    <scope>NUCLEOTIDE SEQUENCE [GENOMIC DNA]</scope>
    <source>
        <strain>cv. Nipponbare</strain>
    </source>
</reference>
<reference key="2">
    <citation type="journal article" date="2007" name="Plant Cell Physiol.">
        <title>Overexpression of a type-A response regulator alters rice morphology and cytokinin metabolism.</title>
        <authorList>
            <person name="Hirose N."/>
            <person name="Makita N."/>
            <person name="Kojima M."/>
            <person name="Kamada-Nobusada T."/>
            <person name="Sakakibara H."/>
        </authorList>
    </citation>
    <scope>NUCLEOTIDE SEQUENCE [MRNA] (ISOFORM 2)</scope>
    <source>
        <strain>cv. Nipponbare</strain>
    </source>
</reference>
<reference key="3">
    <citation type="submission" date="2006-06" db="EMBL/GenBank/DDBJ databases">
        <title>Cloning and characterization of Oryza sativa response regulator.</title>
        <authorList>
            <person name="Zhang J."/>
            <person name="Xia M."/>
            <person name="Cheng B.J."/>
        </authorList>
    </citation>
    <scope>NUCLEOTIDE SEQUENCE [MRNA] (ISOFORM 1)</scope>
    <source>
        <strain>cv. Nipponbare</strain>
    </source>
</reference>
<reference key="4">
    <citation type="journal article" date="2005" name="Nature">
        <title>The map-based sequence of the rice genome.</title>
        <authorList>
            <consortium name="International rice genome sequencing project (IRGSP)"/>
        </authorList>
    </citation>
    <scope>NUCLEOTIDE SEQUENCE [LARGE SCALE GENOMIC DNA]</scope>
    <source>
        <strain>cv. Nipponbare</strain>
    </source>
</reference>
<reference key="5">
    <citation type="journal article" date="2008" name="Nucleic Acids Res.">
        <title>The rice annotation project database (RAP-DB): 2008 update.</title>
        <authorList>
            <consortium name="The rice annotation project (RAP)"/>
        </authorList>
    </citation>
    <scope>GENOME REANNOTATION</scope>
    <source>
        <strain>cv. Nipponbare</strain>
    </source>
</reference>
<reference key="6">
    <citation type="journal article" date="2013" name="Rice">
        <title>Improvement of the Oryza sativa Nipponbare reference genome using next generation sequence and optical map data.</title>
        <authorList>
            <person name="Kawahara Y."/>
            <person name="de la Bastide M."/>
            <person name="Hamilton J.P."/>
            <person name="Kanamori H."/>
            <person name="McCombie W.R."/>
            <person name="Ouyang S."/>
            <person name="Schwartz D.C."/>
            <person name="Tanaka T."/>
            <person name="Wu J."/>
            <person name="Zhou S."/>
            <person name="Childs K.L."/>
            <person name="Davidson R.M."/>
            <person name="Lin H."/>
            <person name="Quesada-Ocampo L."/>
            <person name="Vaillancourt B."/>
            <person name="Sakai H."/>
            <person name="Lee S.S."/>
            <person name="Kim J."/>
            <person name="Numa H."/>
            <person name="Itoh T."/>
            <person name="Buell C.R."/>
            <person name="Matsumoto T."/>
        </authorList>
    </citation>
    <scope>GENOME REANNOTATION</scope>
    <source>
        <strain>cv. Nipponbare</strain>
    </source>
</reference>
<reference key="7">
    <citation type="journal article" date="2006" name="Plant Physiol.">
        <title>Whole-genome analysis of Oryza sativa reveals similar architecture of two-component signaling machinery with Arabidopsis.</title>
        <authorList>
            <person name="Pareek A."/>
            <person name="Singh A."/>
            <person name="Kumar M."/>
            <person name="Kushwaha H.R."/>
            <person name="Lynn A.M."/>
            <person name="Singla-Pareek S.L."/>
        </authorList>
    </citation>
    <scope>DISRUPTION PHENOTYPE</scope>
</reference>
<reference key="8">
    <citation type="journal article" date="2007" name="Plant Physiol.">
        <title>Nomenclature for two-component signaling elements of rice.</title>
        <authorList>
            <person name="Schaller G.E."/>
            <person name="Doi K."/>
            <person name="Hwang I."/>
            <person name="Kieber J.J."/>
            <person name="Khurana J.P."/>
            <person name="Kurata N."/>
            <person name="Mizuno T."/>
            <person name="Pareek A."/>
            <person name="Shiu S.H."/>
            <person name="Wu P."/>
            <person name="Yip W.K."/>
        </authorList>
    </citation>
    <scope>GENE FAMILY</scope>
    <scope>NOMENCLATURE</scope>
</reference>
<reference key="9">
    <citation type="journal article" date="2012" name="Plant Physiol.">
        <title>Characterization of genes involved in cytokinin signaling and metabolism from rice.</title>
        <authorList>
            <person name="Tsai Y.C."/>
            <person name="Weir N.R."/>
            <person name="Hill K."/>
            <person name="Zhang W."/>
            <person name="Kim H.J."/>
            <person name="Shiu S.H."/>
            <person name="Schaller G.E."/>
            <person name="Kieber J.J."/>
        </authorList>
    </citation>
    <scope>INDUCTION BY CYTOKININ</scope>
</reference>
<accession>Q0PVB3</accession>
<accession>Q8H5N4</accession>
<protein>
    <recommendedName>
        <fullName evidence="9">Two-component response regulator ORR7</fullName>
    </recommendedName>
    <alternativeName>
        <fullName evidence="7">OsRR7</fullName>
    </alternativeName>
    <alternativeName>
        <fullName evidence="6">OsRRA5</fullName>
    </alternativeName>
</protein>
<organism>
    <name type="scientific">Oryza sativa subsp. japonica</name>
    <name type="common">Rice</name>
    <dbReference type="NCBI Taxonomy" id="39947"/>
    <lineage>
        <taxon>Eukaryota</taxon>
        <taxon>Viridiplantae</taxon>
        <taxon>Streptophyta</taxon>
        <taxon>Embryophyta</taxon>
        <taxon>Tracheophyta</taxon>
        <taxon>Spermatophyta</taxon>
        <taxon>Magnoliopsida</taxon>
        <taxon>Liliopsida</taxon>
        <taxon>Poales</taxon>
        <taxon>Poaceae</taxon>
        <taxon>BOP clade</taxon>
        <taxon>Oryzoideae</taxon>
        <taxon>Oryzeae</taxon>
        <taxon>Oryzinae</taxon>
        <taxon>Oryza</taxon>
        <taxon>Oryza sativa</taxon>
    </lineage>
</organism>
<gene>
    <name evidence="8" type="primary">RR7</name>
    <name evidence="10" type="synonym">RR</name>
    <name evidence="11" type="ordered locus">Os07g0449700</name>
    <name evidence="9" type="ordered locus">LOC_Os07g26720</name>
    <name evidence="12" type="ORF">OJ1047_A06.126</name>
</gene>
<feature type="chain" id="PRO_0000433828" description="Two-component response regulator ORR7">
    <location>
        <begin position="1"/>
        <end position="210"/>
    </location>
</feature>
<feature type="domain" description="Response regulatory" evidence="2">
    <location>
        <begin position="92"/>
        <end position="205"/>
    </location>
</feature>
<feature type="region of interest" description="Disordered" evidence="3">
    <location>
        <begin position="53"/>
        <end position="92"/>
    </location>
</feature>
<feature type="compositionally biased region" description="Acidic residues" evidence="3">
    <location>
        <begin position="61"/>
        <end position="88"/>
    </location>
</feature>
<feature type="modified residue" description="4-aspartylphosphate" evidence="2">
    <location>
        <position position="142"/>
    </location>
</feature>
<feature type="splice variant" id="VSP_057845" description="In isoform 2.">
    <location>
        <begin position="117"/>
        <end position="120"/>
    </location>
</feature>
<keyword id="KW-0025">Alternative splicing</keyword>
<keyword id="KW-0932">Cytokinin signaling pathway</keyword>
<keyword id="KW-0597">Phosphoprotein</keyword>
<keyword id="KW-1185">Reference proteome</keyword>
<keyword id="KW-0804">Transcription</keyword>
<keyword id="KW-0805">Transcription regulation</keyword>
<keyword id="KW-0902">Two-component regulatory system</keyword>
<dbReference type="EMBL" id="BR000316">
    <property type="protein sequence ID" value="FAA00268.1"/>
    <property type="molecule type" value="Genomic_DNA"/>
</dbReference>
<dbReference type="EMBL" id="AB249657">
    <property type="protein sequence ID" value="BAE79351.1"/>
    <property type="molecule type" value="mRNA"/>
</dbReference>
<dbReference type="EMBL" id="DQ683568">
    <property type="protein sequence ID" value="ABG78591.1"/>
    <property type="molecule type" value="mRNA"/>
</dbReference>
<dbReference type="EMBL" id="AP003802">
    <property type="protein sequence ID" value="BAC15873.1"/>
    <property type="molecule type" value="Genomic_DNA"/>
</dbReference>
<dbReference type="EMBL" id="AP008213">
    <property type="status" value="NOT_ANNOTATED_CDS"/>
    <property type="molecule type" value="Genomic_DNA"/>
</dbReference>
<dbReference type="EMBL" id="AP014963">
    <property type="protein sequence ID" value="BAT01309.1"/>
    <property type="molecule type" value="Genomic_DNA"/>
</dbReference>
<dbReference type="SMR" id="Q0PVB3"/>
<dbReference type="FunCoup" id="Q0PVB3">
    <property type="interactions" value="29"/>
</dbReference>
<dbReference type="STRING" id="39947.Q0PVB3"/>
<dbReference type="PaxDb" id="39947-Q0PVB3"/>
<dbReference type="eggNOG" id="KOG1601">
    <property type="taxonomic scope" value="Eukaryota"/>
</dbReference>
<dbReference type="InParanoid" id="Q0PVB3"/>
<dbReference type="OMA" id="NELKFLW"/>
<dbReference type="Proteomes" id="UP000000763">
    <property type="component" value="Chromosome 7"/>
</dbReference>
<dbReference type="Proteomes" id="UP000059680">
    <property type="component" value="Chromosome 7"/>
</dbReference>
<dbReference type="GO" id="GO:0009736">
    <property type="term" value="P:cytokinin-activated signaling pathway"/>
    <property type="evidence" value="ECO:0007669"/>
    <property type="project" value="UniProtKB-KW"/>
</dbReference>
<dbReference type="GO" id="GO:0000160">
    <property type="term" value="P:phosphorelay signal transduction system"/>
    <property type="evidence" value="ECO:0007669"/>
    <property type="project" value="UniProtKB-KW"/>
</dbReference>
<dbReference type="CDD" id="cd17581">
    <property type="entry name" value="REC_typeA_ARR"/>
    <property type="match status" value="1"/>
</dbReference>
<dbReference type="FunFam" id="3.40.50.2300:FF:000159">
    <property type="entry name" value="Two-component response regulator ORR5"/>
    <property type="match status" value="1"/>
</dbReference>
<dbReference type="Gene3D" id="3.40.50.2300">
    <property type="match status" value="1"/>
</dbReference>
<dbReference type="InterPro" id="IPR045279">
    <property type="entry name" value="ARR-like"/>
</dbReference>
<dbReference type="InterPro" id="IPR011006">
    <property type="entry name" value="CheY-like_superfamily"/>
</dbReference>
<dbReference type="InterPro" id="IPR001789">
    <property type="entry name" value="Sig_transdc_resp-reg_receiver"/>
</dbReference>
<dbReference type="PANTHER" id="PTHR43874">
    <property type="entry name" value="TWO-COMPONENT RESPONSE REGULATOR"/>
    <property type="match status" value="1"/>
</dbReference>
<dbReference type="PANTHER" id="PTHR43874:SF18">
    <property type="entry name" value="TWO-COMPONENT RESPONSE REGULATOR ORR7"/>
    <property type="match status" value="1"/>
</dbReference>
<dbReference type="Pfam" id="PF00072">
    <property type="entry name" value="Response_reg"/>
    <property type="match status" value="1"/>
</dbReference>
<dbReference type="SMART" id="SM00448">
    <property type="entry name" value="REC"/>
    <property type="match status" value="1"/>
</dbReference>
<dbReference type="SUPFAM" id="SSF52172">
    <property type="entry name" value="CheY-like"/>
    <property type="match status" value="1"/>
</dbReference>
<dbReference type="PROSITE" id="PS50110">
    <property type="entry name" value="RESPONSE_REGULATORY"/>
    <property type="match status" value="1"/>
</dbReference>
<sequence>MRVPAAVTGGCGCGVDGGGGCCRGGGKLADWEEGKDDEMKSVVVKGWTRMAQVVPLHDNASAEDDDDDEEDDDEDDDDDDDEDDEEEAAPPYVMAVDDSSVDRAVITALLRRSKYRVTAVDSGKRALEILGSEPNVSMIITDYWMPEMTGYDLLKKIKESSELKQIPVVIMSSENVPTRISRCLEEGAEDFLLKPVRPADISRITSRMLQ</sequence>
<comment type="function">
    <text evidence="1">Functions as a response regulator involved in His-to-Asp phosphorelay signal transduction system. Phosphorylation of the Asp residue in the receiver domain activates the ability of the protein to promote the transcription of target genes. Type-A response regulators seem to act as negative regulators of the cytokinin signaling.</text>
</comment>
<comment type="alternative products">
    <event type="alternative splicing"/>
    <isoform>
        <id>Q0PVB3-1</id>
        <name>1</name>
        <sequence type="displayed"/>
    </isoform>
    <isoform>
        <id>Q0PVB3-2</id>
        <name>2</name>
        <sequence type="described" ref="VSP_057845"/>
    </isoform>
</comment>
<comment type="induction">
    <text evidence="5">By cytokinin in roots.</text>
</comment>
<comment type="PTM">
    <text evidence="9">Two-component system major event consists of a His-to-Asp phosphorelay between a sensor histidine kinase (HK) and a response regulator (RR). In plants, the His-to-Asp phosphorelay involves an additional intermediate named Histidine-containing phosphotransfer protein (HPt). This multistep phosphorelay consists of a His-Asp-His-Asp sequential transfer of a phosphate group between first a His and an Asp of the HK protein, followed by the transfer to a conserved His of the HPt protein and finally the transfer to an Asp in the receiver domain of the RR protein.</text>
</comment>
<comment type="disruption phenotype">
    <text evidence="4">Dwarf, narrow leaf and low tillering phenotypes.</text>
</comment>
<comment type="similarity">
    <text evidence="9">Belongs to the ARR family. Type-A subfamily.</text>
</comment>
<evidence type="ECO:0000250" key="1">
    <source>
        <dbReference type="UniProtKB" id="Q9ZWS9"/>
    </source>
</evidence>
<evidence type="ECO:0000255" key="2">
    <source>
        <dbReference type="PROSITE-ProRule" id="PRU00169"/>
    </source>
</evidence>
<evidence type="ECO:0000256" key="3">
    <source>
        <dbReference type="SAM" id="MobiDB-lite"/>
    </source>
</evidence>
<evidence type="ECO:0000269" key="4">
    <source>
    </source>
</evidence>
<evidence type="ECO:0000269" key="5">
    <source>
    </source>
</evidence>
<evidence type="ECO:0000303" key="6">
    <source>
    </source>
</evidence>
<evidence type="ECO:0000303" key="7">
    <source>
    </source>
</evidence>
<evidence type="ECO:0000303" key="8">
    <source>
    </source>
</evidence>
<evidence type="ECO:0000305" key="9"/>
<evidence type="ECO:0000312" key="10">
    <source>
        <dbReference type="EMBL" id="ABG78591.1"/>
    </source>
</evidence>
<evidence type="ECO:0000312" key="11">
    <source>
        <dbReference type="EMBL" id="AP008213"/>
    </source>
</evidence>
<evidence type="ECO:0000312" key="12">
    <source>
        <dbReference type="EMBL" id="BAC15873.1"/>
    </source>
</evidence>
<proteinExistence type="evidence at transcript level"/>
<name>ORR7_ORYSJ</name>